<name>MOCS1_BOVIN</name>
<gene>
    <name type="primary">MOCS1</name>
</gene>
<feature type="chain" id="PRO_0000369399" description="Molybdenum cofactor biosynthesis protein 1">
    <location>
        <begin position="1"/>
        <end position="633"/>
    </location>
</feature>
<feature type="domain" description="Radical SAM core" evidence="6">
    <location>
        <begin position="61"/>
        <end position="295"/>
    </location>
</feature>
<feature type="region of interest" description="Molybdenum cofactor biosynthesis protein A">
    <location>
        <begin position="1"/>
        <end position="380"/>
    </location>
</feature>
<feature type="region of interest" description="Molybdenum cofactor biosynthesis protein C">
    <location>
        <begin position="410"/>
        <end position="633"/>
    </location>
</feature>
<feature type="region of interest" description="Disordered" evidence="7">
    <location>
        <begin position="446"/>
        <end position="480"/>
    </location>
</feature>
<feature type="active site" description="For molybdenum cofactor biosynthesis protein C activity" evidence="5">
    <location>
        <position position="603"/>
    </location>
</feature>
<feature type="binding site" evidence="1">
    <location>
        <position position="70"/>
    </location>
    <ligand>
        <name>GTP</name>
        <dbReference type="ChEBI" id="CHEBI:37565"/>
    </ligand>
</feature>
<feature type="binding site" evidence="1">
    <location>
        <position position="77"/>
    </location>
    <ligand>
        <name>[4Fe-4S] cluster</name>
        <dbReference type="ChEBI" id="CHEBI:49883"/>
        <label>1</label>
        <note>4Fe-4S-S-AdoMet</note>
    </ligand>
</feature>
<feature type="binding site" evidence="1">
    <location>
        <position position="81"/>
    </location>
    <ligand>
        <name>[4Fe-4S] cluster</name>
        <dbReference type="ChEBI" id="CHEBI:49883"/>
        <label>1</label>
        <note>4Fe-4S-S-AdoMet</note>
    </ligand>
</feature>
<feature type="binding site" evidence="1">
    <location>
        <position position="83"/>
    </location>
    <ligand>
        <name>S-adenosyl-L-methionine</name>
        <dbReference type="ChEBI" id="CHEBI:59789"/>
    </ligand>
</feature>
<feature type="binding site" evidence="1">
    <location>
        <position position="84"/>
    </location>
    <ligand>
        <name>[4Fe-4S] cluster</name>
        <dbReference type="ChEBI" id="CHEBI:49883"/>
        <label>1</label>
        <note>4Fe-4S-S-AdoMet</note>
    </ligand>
</feature>
<feature type="binding site" evidence="1">
    <location>
        <position position="120"/>
    </location>
    <ligand>
        <name>GTP</name>
        <dbReference type="ChEBI" id="CHEBI:37565"/>
    </ligand>
</feature>
<feature type="binding site" evidence="1">
    <location>
        <position position="124"/>
    </location>
    <ligand>
        <name>S-adenosyl-L-methionine</name>
        <dbReference type="ChEBI" id="CHEBI:59789"/>
    </ligand>
</feature>
<feature type="binding site" evidence="1">
    <location>
        <position position="151"/>
    </location>
    <ligand>
        <name>GTP</name>
        <dbReference type="ChEBI" id="CHEBI:37565"/>
    </ligand>
</feature>
<feature type="binding site" evidence="1">
    <location>
        <position position="175"/>
    </location>
    <ligand>
        <name>S-adenosyl-L-methionine</name>
        <dbReference type="ChEBI" id="CHEBI:59789"/>
    </ligand>
</feature>
<feature type="binding site" evidence="1">
    <location>
        <position position="212"/>
    </location>
    <ligand>
        <name>GTP</name>
        <dbReference type="ChEBI" id="CHEBI:37565"/>
    </ligand>
</feature>
<feature type="binding site" evidence="1">
    <location>
        <position position="246"/>
    </location>
    <ligand>
        <name>S-adenosyl-L-methionine</name>
        <dbReference type="ChEBI" id="CHEBI:59789"/>
    </ligand>
</feature>
<feature type="binding site" evidence="1">
    <location>
        <position position="309"/>
    </location>
    <ligand>
        <name>[4Fe-4S] cluster</name>
        <dbReference type="ChEBI" id="CHEBI:49883"/>
        <label>2</label>
        <note>4Fe-4S-substrate</note>
    </ligand>
</feature>
<feature type="binding site" evidence="1">
    <location>
        <position position="312"/>
    </location>
    <ligand>
        <name>[4Fe-4S] cluster</name>
        <dbReference type="ChEBI" id="CHEBI:49883"/>
        <label>2</label>
        <note>4Fe-4S-substrate</note>
    </ligand>
</feature>
<feature type="binding site" evidence="1">
    <location>
        <begin position="314"/>
        <end position="316"/>
    </location>
    <ligand>
        <name>GTP</name>
        <dbReference type="ChEBI" id="CHEBI:37565"/>
    </ligand>
</feature>
<feature type="binding site" evidence="1">
    <location>
        <position position="326"/>
    </location>
    <ligand>
        <name>[4Fe-4S] cluster</name>
        <dbReference type="ChEBI" id="CHEBI:49883"/>
        <label>2</label>
        <note>4Fe-4S-substrate</note>
    </ligand>
</feature>
<feature type="modified residue" description="Phosphoserine" evidence="4">
    <location>
        <position position="61"/>
    </location>
</feature>
<feature type="modified residue" description="N6-acetyllysine" evidence="4">
    <location>
        <position position="195"/>
    </location>
</feature>
<feature type="modified residue" description="N6-acetyllysine" evidence="3">
    <location>
        <position position="525"/>
    </location>
</feature>
<feature type="splice variant" id="VSP_036847" description="In isoform MOCS1A." evidence="8 9">
    <original>EL</original>
    <variation>GG</variation>
    <location>
        <begin position="381"/>
        <end position="382"/>
    </location>
</feature>
<feature type="splice variant" id="VSP_036848" description="In isoform MOCS1A." evidence="8 9">
    <location>
        <begin position="383"/>
        <end position="633"/>
    </location>
</feature>
<feature type="sequence conflict" description="In Ref. 1; AAX46428." evidence="10" ref="1">
    <original>H</original>
    <variation>R</variation>
    <location>
        <position position="65"/>
    </location>
</feature>
<protein>
    <recommendedName>
        <fullName>Molybdenum cofactor biosynthesis protein 1</fullName>
    </recommendedName>
    <domain>
        <recommendedName>
            <fullName>GTP 3',8-cyclase</fullName>
            <ecNumber evidence="2">4.1.99.22</ecNumber>
        </recommendedName>
        <alternativeName>
            <fullName>Molybdenum cofactor biosynthesis protein A</fullName>
        </alternativeName>
    </domain>
    <domain>
        <recommendedName>
            <fullName>Cyclic pyranopterin monophosphate synthase</fullName>
            <ecNumber evidence="4">4.6.1.17</ecNumber>
        </recommendedName>
        <alternativeName>
            <fullName>Molybdenum cofactor biosynthesis protein C</fullName>
        </alternativeName>
    </domain>
</protein>
<reference key="1">
    <citation type="journal article" date="2005" name="BMC Genomics">
        <title>Characterization of 954 bovine full-CDS cDNA sequences.</title>
        <authorList>
            <person name="Harhay G.P."/>
            <person name="Sonstegard T.S."/>
            <person name="Keele J.W."/>
            <person name="Heaton M.P."/>
            <person name="Clawson M.L."/>
            <person name="Snelling W.M."/>
            <person name="Wiedmann R.T."/>
            <person name="Van Tassell C.P."/>
            <person name="Smith T.P.L."/>
        </authorList>
    </citation>
    <scope>NUCLEOTIDE SEQUENCE [LARGE SCALE MRNA] (ISOFORM MOCS1A)</scope>
</reference>
<reference key="2">
    <citation type="submission" date="2006-10" db="EMBL/GenBank/DDBJ databases">
        <authorList>
            <consortium name="NIH - Mammalian Gene Collection (MGC) project"/>
        </authorList>
    </citation>
    <scope>NUCLEOTIDE SEQUENCE [LARGE SCALE MRNA] (ISOFORM MOCS1A)</scope>
    <scope>NUCLEOTIDE SEQUENCE [LARGE SCALE MRNA] OF 323-633 (ISOFORM MOCS1B)</scope>
    <source>
        <strain>Hereford</strain>
        <tissue>Ascending colon</tissue>
        <tissue>Uterus</tissue>
    </source>
</reference>
<proteinExistence type="evidence at transcript level"/>
<keyword id="KW-0004">4Fe-4S</keyword>
<keyword id="KW-0007">Acetylation</keyword>
<keyword id="KW-0025">Alternative splicing</keyword>
<keyword id="KW-0342">GTP-binding</keyword>
<keyword id="KW-0408">Iron</keyword>
<keyword id="KW-0411">Iron-sulfur</keyword>
<keyword id="KW-0456">Lyase</keyword>
<keyword id="KW-0479">Metal-binding</keyword>
<keyword id="KW-0501">Molybdenum cofactor biosynthesis</keyword>
<keyword id="KW-0547">Nucleotide-binding</keyword>
<keyword id="KW-0597">Phosphoprotein</keyword>
<keyword id="KW-1185">Reference proteome</keyword>
<keyword id="KW-0949">S-adenosyl-L-methionine</keyword>
<accession>Q1JQD7</accession>
<accession>A8SMN8</accession>
<accession>Q58DL6</accession>
<evidence type="ECO:0000250" key="1"/>
<evidence type="ECO:0000250" key="2">
    <source>
        <dbReference type="UniProtKB" id="P69848"/>
    </source>
</evidence>
<evidence type="ECO:0000250" key="3">
    <source>
        <dbReference type="UniProtKB" id="Q5RKZ7"/>
    </source>
</evidence>
<evidence type="ECO:0000250" key="4">
    <source>
        <dbReference type="UniProtKB" id="Q9NZB8"/>
    </source>
</evidence>
<evidence type="ECO:0000255" key="5"/>
<evidence type="ECO:0000255" key="6">
    <source>
        <dbReference type="PROSITE-ProRule" id="PRU01266"/>
    </source>
</evidence>
<evidence type="ECO:0000256" key="7">
    <source>
        <dbReference type="SAM" id="MobiDB-lite"/>
    </source>
</evidence>
<evidence type="ECO:0000303" key="8">
    <source>
    </source>
</evidence>
<evidence type="ECO:0000303" key="9">
    <source ref="2"/>
</evidence>
<evidence type="ECO:0000305" key="10"/>
<dbReference type="EC" id="4.1.99.22" evidence="2"/>
<dbReference type="EC" id="4.6.1.17" evidence="4"/>
<dbReference type="EMBL" id="BT021581">
    <property type="protein sequence ID" value="AAX46428.1"/>
    <property type="molecule type" value="mRNA"/>
</dbReference>
<dbReference type="EMBL" id="BC116030">
    <property type="protein sequence ID" value="AAI16031.1"/>
    <property type="molecule type" value="mRNA"/>
</dbReference>
<dbReference type="EMBL" id="BC126847">
    <property type="protein sequence ID" value="AAI26848.1"/>
    <property type="molecule type" value="mRNA"/>
</dbReference>
<dbReference type="RefSeq" id="NP_001013615.1">
    <property type="nucleotide sequence ID" value="NM_001013597.1"/>
</dbReference>
<dbReference type="RefSeq" id="NP_001159769.1">
    <molecule id="Q1JQD7-1"/>
    <property type="nucleotide sequence ID" value="NM_001166297.1"/>
</dbReference>
<dbReference type="SMR" id="Q1JQD7"/>
<dbReference type="FunCoup" id="Q1JQD7">
    <property type="interactions" value="1249"/>
</dbReference>
<dbReference type="STRING" id="9913.ENSBTAP00000013792"/>
<dbReference type="PaxDb" id="9913-ENSBTAP00000013792"/>
<dbReference type="GeneID" id="281917"/>
<dbReference type="KEGG" id="bta:281917"/>
<dbReference type="CTD" id="4337"/>
<dbReference type="VEuPathDB" id="HostDB:ENSBTAG00000010449"/>
<dbReference type="eggNOG" id="KOG2876">
    <property type="taxonomic scope" value="Eukaryota"/>
</dbReference>
<dbReference type="HOGENOM" id="CLU_009273_7_3_1"/>
<dbReference type="InParanoid" id="Q1JQD7"/>
<dbReference type="OMA" id="QTVHMTS"/>
<dbReference type="OrthoDB" id="429626at2759"/>
<dbReference type="TreeFam" id="TF300424"/>
<dbReference type="Reactome" id="R-BTA-947581">
    <property type="pathway name" value="Molybdenum cofactor biosynthesis"/>
</dbReference>
<dbReference type="UniPathway" id="UPA00344"/>
<dbReference type="Proteomes" id="UP000009136">
    <property type="component" value="Chromosome 23"/>
</dbReference>
<dbReference type="Bgee" id="ENSBTAG00000010449">
    <property type="expression patterns" value="Expressed in monocyte and 103 other cell types or tissues"/>
</dbReference>
<dbReference type="GO" id="GO:0051539">
    <property type="term" value="F:4 iron, 4 sulfur cluster binding"/>
    <property type="evidence" value="ECO:0007669"/>
    <property type="project" value="UniProtKB-KW"/>
</dbReference>
<dbReference type="GO" id="GO:0061799">
    <property type="term" value="F:cyclic pyranopterin monophosphate synthase activity"/>
    <property type="evidence" value="ECO:0000318"/>
    <property type="project" value="GO_Central"/>
</dbReference>
<dbReference type="GO" id="GO:0061798">
    <property type="term" value="F:GTP 3',8'-cyclase activity"/>
    <property type="evidence" value="ECO:0000318"/>
    <property type="project" value="GO_Central"/>
</dbReference>
<dbReference type="GO" id="GO:0005525">
    <property type="term" value="F:GTP binding"/>
    <property type="evidence" value="ECO:0007669"/>
    <property type="project" value="UniProtKB-KW"/>
</dbReference>
<dbReference type="GO" id="GO:0046872">
    <property type="term" value="F:metal ion binding"/>
    <property type="evidence" value="ECO:0007669"/>
    <property type="project" value="UniProtKB-KW"/>
</dbReference>
<dbReference type="GO" id="GO:0006777">
    <property type="term" value="P:Mo-molybdopterin cofactor biosynthetic process"/>
    <property type="evidence" value="ECO:0000250"/>
    <property type="project" value="UniProtKB"/>
</dbReference>
<dbReference type="CDD" id="cd01420">
    <property type="entry name" value="MoaC_PE"/>
    <property type="match status" value="1"/>
</dbReference>
<dbReference type="CDD" id="cd01335">
    <property type="entry name" value="Radical_SAM"/>
    <property type="match status" value="1"/>
</dbReference>
<dbReference type="CDD" id="cd21117">
    <property type="entry name" value="Twitch_MoaA"/>
    <property type="match status" value="1"/>
</dbReference>
<dbReference type="FunFam" id="3.30.70.640:FF:000002">
    <property type="entry name" value="Molybdenum cofactor biosynthesis protein 1"/>
    <property type="match status" value="1"/>
</dbReference>
<dbReference type="FunFam" id="3.20.20.70:FF:000117">
    <property type="entry name" value="molybdenum cofactor biosynthesis protein 1"/>
    <property type="match status" value="1"/>
</dbReference>
<dbReference type="Gene3D" id="3.20.20.70">
    <property type="entry name" value="Aldolase class I"/>
    <property type="match status" value="1"/>
</dbReference>
<dbReference type="Gene3D" id="3.30.70.640">
    <property type="entry name" value="Molybdopterin cofactor biosynthesis C (MoaC) domain"/>
    <property type="match status" value="1"/>
</dbReference>
<dbReference type="HAMAP" id="MF_01225_B">
    <property type="entry name" value="MoaA_B"/>
    <property type="match status" value="1"/>
</dbReference>
<dbReference type="HAMAP" id="MF_01224_B">
    <property type="entry name" value="MoaC_B"/>
    <property type="match status" value="1"/>
</dbReference>
<dbReference type="InterPro" id="IPR013785">
    <property type="entry name" value="Aldolase_TIM"/>
</dbReference>
<dbReference type="InterPro" id="IPR006638">
    <property type="entry name" value="Elp3/MiaA/NifB-like_rSAM"/>
</dbReference>
<dbReference type="InterPro" id="IPR013483">
    <property type="entry name" value="MoaA"/>
</dbReference>
<dbReference type="InterPro" id="IPR000385">
    <property type="entry name" value="MoaA_NifB_PqqE_Fe-S-bd_CS"/>
</dbReference>
<dbReference type="InterPro" id="IPR010505">
    <property type="entry name" value="MoaA_twitch"/>
</dbReference>
<dbReference type="InterPro" id="IPR023045">
    <property type="entry name" value="MoaC"/>
</dbReference>
<dbReference type="InterPro" id="IPR047594">
    <property type="entry name" value="MoaC_bact/euk"/>
</dbReference>
<dbReference type="InterPro" id="IPR036522">
    <property type="entry name" value="MoaC_sf"/>
</dbReference>
<dbReference type="InterPro" id="IPR050105">
    <property type="entry name" value="MoCo_biosynth_MoaA/MoaC"/>
</dbReference>
<dbReference type="InterPro" id="IPR002820">
    <property type="entry name" value="Mopterin_CF_biosynth-C_dom"/>
</dbReference>
<dbReference type="InterPro" id="IPR007197">
    <property type="entry name" value="rSAM"/>
</dbReference>
<dbReference type="NCBIfam" id="TIGR02666">
    <property type="entry name" value="moaA"/>
    <property type="match status" value="1"/>
</dbReference>
<dbReference type="NCBIfam" id="TIGR00581">
    <property type="entry name" value="moaC"/>
    <property type="match status" value="1"/>
</dbReference>
<dbReference type="NCBIfam" id="NF001199">
    <property type="entry name" value="PRK00164.2-1"/>
    <property type="match status" value="1"/>
</dbReference>
<dbReference type="NCBIfam" id="NF006870">
    <property type="entry name" value="PRK09364.1"/>
    <property type="match status" value="1"/>
</dbReference>
<dbReference type="PANTHER" id="PTHR22960:SF0">
    <property type="entry name" value="MOLYBDENUM COFACTOR BIOSYNTHESIS PROTEIN 1"/>
    <property type="match status" value="1"/>
</dbReference>
<dbReference type="PANTHER" id="PTHR22960">
    <property type="entry name" value="MOLYBDOPTERIN COFACTOR SYNTHESIS PROTEIN A"/>
    <property type="match status" value="1"/>
</dbReference>
<dbReference type="Pfam" id="PF13353">
    <property type="entry name" value="Fer4_12"/>
    <property type="match status" value="1"/>
</dbReference>
<dbReference type="Pfam" id="PF01967">
    <property type="entry name" value="MoaC"/>
    <property type="match status" value="1"/>
</dbReference>
<dbReference type="Pfam" id="PF06463">
    <property type="entry name" value="Mob_synth_C"/>
    <property type="match status" value="1"/>
</dbReference>
<dbReference type="Pfam" id="PF04055">
    <property type="entry name" value="Radical_SAM"/>
    <property type="match status" value="1"/>
</dbReference>
<dbReference type="SFLD" id="SFLDG01383">
    <property type="entry name" value="cyclic_pyranopterin_phosphate"/>
    <property type="match status" value="1"/>
</dbReference>
<dbReference type="SFLD" id="SFLDS00029">
    <property type="entry name" value="Radical_SAM"/>
    <property type="match status" value="1"/>
</dbReference>
<dbReference type="SMART" id="SM00729">
    <property type="entry name" value="Elp3"/>
    <property type="match status" value="1"/>
</dbReference>
<dbReference type="SUPFAM" id="SSF55040">
    <property type="entry name" value="Molybdenum cofactor biosynthesis protein C, MoaC"/>
    <property type="match status" value="1"/>
</dbReference>
<dbReference type="SUPFAM" id="SSF102114">
    <property type="entry name" value="Radical SAM enzymes"/>
    <property type="match status" value="1"/>
</dbReference>
<dbReference type="PROSITE" id="PS01305">
    <property type="entry name" value="MOAA_NIFB_PQQE"/>
    <property type="match status" value="1"/>
</dbReference>
<dbReference type="PROSITE" id="PS51918">
    <property type="entry name" value="RADICAL_SAM"/>
    <property type="match status" value="1"/>
</dbReference>
<sequence length="633" mass="69659">MAAQPVSRVVRRVLRAGVRSCSSGAPVTQPCPGEPVVEVLSRPRPFLGEHAAPFSAFLTDSFGRHHSYLRISLTERCNLRCQYCMPEEGVPLTPKADLLTTEEILTLARLFVKEGVDKIRLTGGEPLIRPDVVDIVAQLRQLEGLRTIGITTNGINLARLLPQLQKAGLSAINISLDTLVPAKFEFIVRRKGFHKVMEGIHKAIELGYSPVKVNCVVMRGLNEDELLDFVALTEGLPLDVRFIEYMPFDGNKWNFKKMVSYKEMLDTLRQQWPELEKLPEEESSTAKAFKIPGFRGQVSFITSMSEHFCGTCNRLRITADGNLKVCLFGNSEVSLRDHLRAGASEEELLRVIGAAVGRKKRQHAGMFNISQMKNRPMILIELFLMRQDSPPALPSTFRNSLRVQVLRHRVSFSSQMVTLWKGGGVPQAPLVAQRWLGSSLPQRHFSSHLDSDANPKCLSPTEPQAPAASSGPLPDSDQLTHVDTEGRMAMVDVGRKPDTERVAVASAVVLLGPVAFKLIQENQLKKGDALAVAQLAGIQAAKLTSQLIPLCHHVALSHVQVQLELDRTRHAAVIQASCRARGPTGVEMEALTSAAVAALALYDMCKAVSRDIVLAEIKLVSKTGGQRGDFHRT</sequence>
<comment type="function">
    <text evidence="4">Isoform MOCS1A and isoform MOCS1B probably form a complex that catalyzes the conversion of 5'-GTP to cyclic pyranopterin monophosphate (cPMP). MOCS1A catalyzes the cyclization of GTP to (8S)-3',8-cyclo-7,8-dihydroguanosine 5'-triphosphate and MOCS1B catalyzes the subsequent conversion of (8S)-3',8-cyclo-7,8-dihydroguanosine 5'-triphosphate to cPMP.</text>
</comment>
<comment type="catalytic activity">
    <reaction evidence="2">
        <text>GTP + AH2 + S-adenosyl-L-methionine = (8S)-3',8-cyclo-7,8-dihydroguanosine 5'-triphosphate + 5'-deoxyadenosine + L-methionine + A + H(+)</text>
        <dbReference type="Rhea" id="RHEA:49576"/>
        <dbReference type="ChEBI" id="CHEBI:13193"/>
        <dbReference type="ChEBI" id="CHEBI:15378"/>
        <dbReference type="ChEBI" id="CHEBI:17319"/>
        <dbReference type="ChEBI" id="CHEBI:17499"/>
        <dbReference type="ChEBI" id="CHEBI:37565"/>
        <dbReference type="ChEBI" id="CHEBI:57844"/>
        <dbReference type="ChEBI" id="CHEBI:59789"/>
        <dbReference type="ChEBI" id="CHEBI:131766"/>
        <dbReference type="EC" id="4.1.99.22"/>
    </reaction>
</comment>
<comment type="catalytic activity">
    <reaction evidence="4">
        <text>(8S)-3',8-cyclo-7,8-dihydroguanosine 5'-triphosphate = cyclic pyranopterin phosphate + diphosphate</text>
        <dbReference type="Rhea" id="RHEA:49580"/>
        <dbReference type="ChEBI" id="CHEBI:33019"/>
        <dbReference type="ChEBI" id="CHEBI:59648"/>
        <dbReference type="ChEBI" id="CHEBI:131766"/>
        <dbReference type="EC" id="4.6.1.17"/>
    </reaction>
</comment>
<comment type="cofactor">
    <cofactor evidence="4">
        <name>[4Fe-4S] cluster</name>
        <dbReference type="ChEBI" id="CHEBI:49883"/>
    </cofactor>
    <text evidence="4">Binds 2 [4Fe-4S] clusters. Binds 1 [4Fe-4S] cluster coordinated with 3 cysteines and an exchangeable S-adenosyl-L-methionine and 1 [4Fe-4S] cluster coordinated with 3 cysteines and the GTP-derived substrate.</text>
</comment>
<comment type="pathway">
    <text>Cofactor biosynthesis; molybdopterin biosynthesis.</text>
</comment>
<comment type="subunit">
    <text evidence="4">Isoform MOCS1A and isoform MOCS1B probably form a heterooligomer.</text>
</comment>
<comment type="alternative products">
    <event type="alternative splicing"/>
    <isoform>
        <id>Q1JQD7-1</id>
        <name>MOCS1B</name>
        <sequence type="displayed"/>
    </isoform>
    <isoform>
        <id>Q1JQD7-2</id>
        <name>MOCS1A</name>
        <sequence type="described" ref="VSP_036847 VSP_036848"/>
    </isoform>
</comment>
<comment type="similarity">
    <text evidence="10">In the C-terminal section; belongs to the MoaC family.</text>
</comment>
<comment type="similarity">
    <text evidence="10">In the N-terminal section; belongs to the radical SAM superfamily. MoaA family.</text>
</comment>
<comment type="caution">
    <text evidence="4">The C-terminus of Mocs1a was previously believed to be thiocarboxylated, but it is now known not to be the case.</text>
</comment>
<organism>
    <name type="scientific">Bos taurus</name>
    <name type="common">Bovine</name>
    <dbReference type="NCBI Taxonomy" id="9913"/>
    <lineage>
        <taxon>Eukaryota</taxon>
        <taxon>Metazoa</taxon>
        <taxon>Chordata</taxon>
        <taxon>Craniata</taxon>
        <taxon>Vertebrata</taxon>
        <taxon>Euteleostomi</taxon>
        <taxon>Mammalia</taxon>
        <taxon>Eutheria</taxon>
        <taxon>Laurasiatheria</taxon>
        <taxon>Artiodactyla</taxon>
        <taxon>Ruminantia</taxon>
        <taxon>Pecora</taxon>
        <taxon>Bovidae</taxon>
        <taxon>Bovinae</taxon>
        <taxon>Bos</taxon>
    </lineage>
</organism>